<keyword id="KW-0551">Lipid droplet</keyword>
<keyword id="KW-0496">Mitochondrion</keyword>
<sequence>MSDEIVTNKSVTYVNNTTPVTITXSELDLRSCYQDDEVVIEVHAAALNPIDFITHQLCNSYIFGKYPKTYSRDYSGVIIKAGKDVDNRWKVGDKVNGMYSHIYGERGTLTHYLILNPAKDIPITHMVEVPKDENDPYDDFVYAAAWPLTFGTAFSTLYDFKKDWTSDSKVLVIGASTSVSYAFVHIAKNYFNIGTVVGICSKNSIERNKKLGYDYLVPYDEGSIVENVKKLKQIVLENDKFDMIXDSVGNHDFFPVIDQFLKPKAKNSFYVTIAGNNKANYKNISWRDFVSLSSILKAINPFKKYNWRFGHPYPPNNFIEVGNEMIKKGTYKPPIDSVYEFDQYKEAIDRLMSNRAKGKVVVKMK</sequence>
<proteinExistence type="inferred from homology"/>
<accession>E7NLM5</accession>
<organism>
    <name type="scientific">Saccharomyces cerevisiae (strain FostersO)</name>
    <name type="common">Baker's yeast</name>
    <dbReference type="NCBI Taxonomy" id="764101"/>
    <lineage>
        <taxon>Eukaryota</taxon>
        <taxon>Fungi</taxon>
        <taxon>Dikarya</taxon>
        <taxon>Ascomycota</taxon>
        <taxon>Saccharomycotina</taxon>
        <taxon>Saccharomycetes</taxon>
        <taxon>Saccharomycetales</taxon>
        <taxon>Saccharomycetaceae</taxon>
        <taxon>Saccharomyces</taxon>
    </lineage>
</organism>
<dbReference type="EMBL" id="AEEZ01000075">
    <property type="protein sequence ID" value="EGA61034.1"/>
    <property type="molecule type" value="Genomic_DNA"/>
</dbReference>
<dbReference type="HOGENOM" id="CLU_026673_3_3_1"/>
<dbReference type="OMA" id="GPLTYFT"/>
<dbReference type="OrthoDB" id="39914at4893"/>
<dbReference type="GO" id="GO:0005811">
    <property type="term" value="C:lipid droplet"/>
    <property type="evidence" value="ECO:0007669"/>
    <property type="project" value="UniProtKB-SubCell"/>
</dbReference>
<dbReference type="GO" id="GO:0005739">
    <property type="term" value="C:mitochondrion"/>
    <property type="evidence" value="ECO:0007669"/>
    <property type="project" value="UniProtKB-SubCell"/>
</dbReference>
<dbReference type="CDD" id="cd08247">
    <property type="entry name" value="AST1_like"/>
    <property type="match status" value="1"/>
</dbReference>
<dbReference type="Gene3D" id="3.90.180.10">
    <property type="entry name" value="Medium-chain alcohol dehydrogenases, catalytic domain"/>
    <property type="match status" value="1"/>
</dbReference>
<dbReference type="Gene3D" id="3.40.50.720">
    <property type="entry name" value="NAD(P)-binding Rossmann-like Domain"/>
    <property type="match status" value="1"/>
</dbReference>
<dbReference type="InterPro" id="IPR013154">
    <property type="entry name" value="ADH-like_N"/>
</dbReference>
<dbReference type="InterPro" id="IPR011032">
    <property type="entry name" value="GroES-like_sf"/>
</dbReference>
<dbReference type="InterPro" id="IPR036291">
    <property type="entry name" value="NAD(P)-bd_dom_sf"/>
</dbReference>
<dbReference type="InterPro" id="IPR050700">
    <property type="entry name" value="YIM1/Zinc_Alcohol_DH_Fams"/>
</dbReference>
<dbReference type="PANTHER" id="PTHR11695">
    <property type="entry name" value="ALCOHOL DEHYDROGENASE RELATED"/>
    <property type="match status" value="1"/>
</dbReference>
<dbReference type="PANTHER" id="PTHR11695:SF294">
    <property type="entry name" value="RETICULON-4-INTERACTING PROTEIN 1, MITOCHONDRIAL"/>
    <property type="match status" value="1"/>
</dbReference>
<dbReference type="Pfam" id="PF08240">
    <property type="entry name" value="ADH_N"/>
    <property type="match status" value="1"/>
</dbReference>
<dbReference type="Pfam" id="PF13602">
    <property type="entry name" value="ADH_zinc_N_2"/>
    <property type="match status" value="1"/>
</dbReference>
<dbReference type="SUPFAM" id="SSF50129">
    <property type="entry name" value="GroES-like"/>
    <property type="match status" value="1"/>
</dbReference>
<dbReference type="SUPFAM" id="SSF51735">
    <property type="entry name" value="NAD(P)-binding Rossmann-fold domains"/>
    <property type="match status" value="1"/>
</dbReference>
<protein>
    <recommendedName>
        <fullName>Protein YIM1</fullName>
    </recommendedName>
</protein>
<feature type="chain" id="PRO_0000409686" description="Protein YIM1">
    <location>
        <begin position="1"/>
        <end position="365"/>
    </location>
</feature>
<gene>
    <name type="primary">YIM1</name>
    <name type="ORF">FOSTERSO_3669</name>
</gene>
<reference key="1">
    <citation type="journal article" date="2011" name="PLoS Genet.">
        <title>Whole-genome comparison reveals novel genetic elements that characterize the genome of industrial strains of Saccharomyces cerevisiae.</title>
        <authorList>
            <person name="Borneman A.R."/>
            <person name="Desany B.A."/>
            <person name="Riches D."/>
            <person name="Affourtit J.P."/>
            <person name="Forgan A.H."/>
            <person name="Pretorius I.S."/>
            <person name="Egholm M."/>
            <person name="Chambers P.J."/>
        </authorList>
    </citation>
    <scope>NUCLEOTIDE SEQUENCE [LARGE SCALE GENOMIC DNA]</scope>
    <source>
        <strain>FostersO</strain>
    </source>
</reference>
<evidence type="ECO:0000250" key="1"/>
<evidence type="ECO:0000305" key="2"/>
<name>YIM1_YEASO</name>
<comment type="subcellular location">
    <subcellularLocation>
        <location evidence="1">Lipid droplet</location>
    </subcellularLocation>
    <subcellularLocation>
        <location evidence="1">Mitochondrion</location>
    </subcellularLocation>
</comment>
<comment type="similarity">
    <text evidence="2">Belongs to the YIM1 family.</text>
</comment>